<feature type="chain" id="PRO_0000164250" description="Probable multidrug resistance protein NorM">
    <location>
        <begin position="1"/>
        <end position="458"/>
    </location>
</feature>
<feature type="transmembrane region" description="Helical" evidence="2">
    <location>
        <begin position="21"/>
        <end position="43"/>
    </location>
</feature>
<feature type="transmembrane region" description="Helical" evidence="2">
    <location>
        <begin position="58"/>
        <end position="80"/>
    </location>
</feature>
<feature type="transmembrane region" description="Helical" evidence="2">
    <location>
        <begin position="101"/>
        <end position="123"/>
    </location>
</feature>
<feature type="transmembrane region" description="Helical" evidence="2">
    <location>
        <begin position="143"/>
        <end position="160"/>
    </location>
</feature>
<feature type="transmembrane region" description="Helical" evidence="2">
    <location>
        <begin position="167"/>
        <end position="189"/>
    </location>
</feature>
<feature type="transmembrane region" description="Helical" evidence="2">
    <location>
        <begin position="199"/>
        <end position="221"/>
    </location>
</feature>
<feature type="transmembrane region" description="Helical" evidence="2">
    <location>
        <begin position="251"/>
        <end position="273"/>
    </location>
</feature>
<feature type="transmembrane region" description="Helical" evidence="2">
    <location>
        <begin position="288"/>
        <end position="310"/>
    </location>
</feature>
<feature type="transmembrane region" description="Helical" evidence="2">
    <location>
        <begin position="323"/>
        <end position="345"/>
    </location>
</feature>
<feature type="transmembrane region" description="Helical" evidence="2">
    <location>
        <begin position="360"/>
        <end position="382"/>
    </location>
</feature>
<feature type="transmembrane region" description="Helical" evidence="2">
    <location>
        <begin position="395"/>
        <end position="417"/>
    </location>
</feature>
<feature type="transmembrane region" description="Helical" evidence="2">
    <location>
        <begin position="421"/>
        <end position="443"/>
    </location>
</feature>
<accession>Q8P4E6</accession>
<comment type="function">
    <text evidence="1">Multidrug efflux pump.</text>
</comment>
<comment type="subcellular location">
    <subcellularLocation>
        <location evidence="1">Cell inner membrane</location>
        <topology evidence="1">Multi-pass membrane protein</topology>
    </subcellularLocation>
</comment>
<comment type="similarity">
    <text evidence="3">Belongs to the multi antimicrobial extrusion (MATE) (TC 2.A.66.1) family.</text>
</comment>
<organism>
    <name type="scientific">Xanthomonas campestris pv. campestris (strain ATCC 33913 / DSM 3586 / NCPPB 528 / LMG 568 / P 25)</name>
    <dbReference type="NCBI Taxonomy" id="190485"/>
    <lineage>
        <taxon>Bacteria</taxon>
        <taxon>Pseudomonadati</taxon>
        <taxon>Pseudomonadota</taxon>
        <taxon>Gammaproteobacteria</taxon>
        <taxon>Lysobacterales</taxon>
        <taxon>Lysobacteraceae</taxon>
        <taxon>Xanthomonas</taxon>
    </lineage>
</organism>
<sequence length="458" mass="48168">MSVPHSSPSATPRFAAEVRTTGLLALPLVLGHVSTGLIGFVDNVIAGHHGTATLAAVTIGTSLLWLPMLVPIGTLISLTASVSQLVGAGREREIGPLFRQALWLSLGLGALMFGFLTAVPPLLPTFGIAPDIVPGATDFLHAVRWGGPALTFYFCMRYLSEGMHWTLPTMLLGFGGLLVLAPLGYVLTYGKFGFAEHGAQGLGMASAITMWVQAIAFALYLWRSRRFAHLELFTHLEGPRWRAIGELLRTGLPIGITVLMEGGLFIVTALLIGRLGSTEAAAHQIAINVSQLCFMIPMGVAEATTVRVGHAVGRGDPLGMRRAAWAGYAIVLGTQAVSASILLLGHDAIVGVYTNDAAVAALASVLLLFAATFQFPDGIQVLSAGALRGLKDTRVPMFLAMFSYWGLGMPLGAGLGLGLGWGPQGMWIGLILGLTAAAILMGLRFRQTSRRLTAGAAP</sequence>
<protein>
    <recommendedName>
        <fullName>Probable multidrug resistance protein NorM</fullName>
    </recommendedName>
    <alternativeName>
        <fullName>Multidrug-efflux transporter</fullName>
    </alternativeName>
</protein>
<proteinExistence type="inferred from homology"/>
<keyword id="KW-0050">Antiport</keyword>
<keyword id="KW-0997">Cell inner membrane</keyword>
<keyword id="KW-1003">Cell membrane</keyword>
<keyword id="KW-0406">Ion transport</keyword>
<keyword id="KW-0472">Membrane</keyword>
<keyword id="KW-1185">Reference proteome</keyword>
<keyword id="KW-0812">Transmembrane</keyword>
<keyword id="KW-1133">Transmembrane helix</keyword>
<keyword id="KW-0813">Transport</keyword>
<gene>
    <name type="primary">norM</name>
    <name type="ordered locus">XCC3762</name>
</gene>
<evidence type="ECO:0000250" key="1"/>
<evidence type="ECO:0000255" key="2"/>
<evidence type="ECO:0000305" key="3"/>
<dbReference type="EMBL" id="AE008922">
    <property type="protein sequence ID" value="AAM43019.1"/>
    <property type="molecule type" value="Genomic_DNA"/>
</dbReference>
<dbReference type="RefSeq" id="NP_639107.1">
    <property type="nucleotide sequence ID" value="NC_003902.1"/>
</dbReference>
<dbReference type="RefSeq" id="WP_011038844.1">
    <property type="nucleotide sequence ID" value="NC_003902.1"/>
</dbReference>
<dbReference type="SMR" id="Q8P4E6"/>
<dbReference type="STRING" id="190485.XCC3762"/>
<dbReference type="EnsemblBacteria" id="AAM43019">
    <property type="protein sequence ID" value="AAM43019"/>
    <property type="gene ID" value="XCC3762"/>
</dbReference>
<dbReference type="KEGG" id="xcc:XCC3762"/>
<dbReference type="PATRIC" id="fig|190485.4.peg.4025"/>
<dbReference type="eggNOG" id="COG0534">
    <property type="taxonomic scope" value="Bacteria"/>
</dbReference>
<dbReference type="HOGENOM" id="CLU_012893_6_0_6"/>
<dbReference type="OrthoDB" id="9780160at2"/>
<dbReference type="Proteomes" id="UP000001010">
    <property type="component" value="Chromosome"/>
</dbReference>
<dbReference type="GO" id="GO:0016020">
    <property type="term" value="C:membrane"/>
    <property type="evidence" value="ECO:0000318"/>
    <property type="project" value="GO_Central"/>
</dbReference>
<dbReference type="GO" id="GO:0005886">
    <property type="term" value="C:plasma membrane"/>
    <property type="evidence" value="ECO:0007669"/>
    <property type="project" value="UniProtKB-SubCell"/>
</dbReference>
<dbReference type="GO" id="GO:0015297">
    <property type="term" value="F:antiporter activity"/>
    <property type="evidence" value="ECO:0007669"/>
    <property type="project" value="UniProtKB-KW"/>
</dbReference>
<dbReference type="GO" id="GO:0042910">
    <property type="term" value="F:xenobiotic transmembrane transporter activity"/>
    <property type="evidence" value="ECO:0000318"/>
    <property type="project" value="GO_Central"/>
</dbReference>
<dbReference type="GO" id="GO:0006811">
    <property type="term" value="P:monoatomic ion transport"/>
    <property type="evidence" value="ECO:0007669"/>
    <property type="project" value="UniProtKB-KW"/>
</dbReference>
<dbReference type="GO" id="GO:0046677">
    <property type="term" value="P:response to antibiotic"/>
    <property type="evidence" value="ECO:0000318"/>
    <property type="project" value="GO_Central"/>
</dbReference>
<dbReference type="CDD" id="cd13131">
    <property type="entry name" value="MATE_NorM_like"/>
    <property type="match status" value="1"/>
</dbReference>
<dbReference type="InterPro" id="IPR002528">
    <property type="entry name" value="MATE_fam"/>
</dbReference>
<dbReference type="InterPro" id="IPR050222">
    <property type="entry name" value="MATE_MdtK"/>
</dbReference>
<dbReference type="InterPro" id="IPR048279">
    <property type="entry name" value="MdtK-like"/>
</dbReference>
<dbReference type="NCBIfam" id="TIGR00797">
    <property type="entry name" value="matE"/>
    <property type="match status" value="1"/>
</dbReference>
<dbReference type="PANTHER" id="PTHR43298:SF2">
    <property type="entry name" value="FMN_FAD EXPORTER YEEO-RELATED"/>
    <property type="match status" value="1"/>
</dbReference>
<dbReference type="PANTHER" id="PTHR43298">
    <property type="entry name" value="MULTIDRUG RESISTANCE PROTEIN NORM-RELATED"/>
    <property type="match status" value="1"/>
</dbReference>
<dbReference type="Pfam" id="PF01554">
    <property type="entry name" value="MatE"/>
    <property type="match status" value="2"/>
</dbReference>
<dbReference type="PIRSF" id="PIRSF006603">
    <property type="entry name" value="DinF"/>
    <property type="match status" value="1"/>
</dbReference>
<reference key="1">
    <citation type="journal article" date="2002" name="Nature">
        <title>Comparison of the genomes of two Xanthomonas pathogens with differing host specificities.</title>
        <authorList>
            <person name="da Silva A.C.R."/>
            <person name="Ferro J.A."/>
            <person name="Reinach F.C."/>
            <person name="Farah C.S."/>
            <person name="Furlan L.R."/>
            <person name="Quaggio R.B."/>
            <person name="Monteiro-Vitorello C.B."/>
            <person name="Van Sluys M.A."/>
            <person name="Almeida N.F. Jr."/>
            <person name="Alves L.M.C."/>
            <person name="do Amaral A.M."/>
            <person name="Bertolini M.C."/>
            <person name="Camargo L.E.A."/>
            <person name="Camarotte G."/>
            <person name="Cannavan F."/>
            <person name="Cardozo J."/>
            <person name="Chambergo F."/>
            <person name="Ciapina L.P."/>
            <person name="Cicarelli R.M.B."/>
            <person name="Coutinho L.L."/>
            <person name="Cursino-Santos J.R."/>
            <person name="El-Dorry H."/>
            <person name="Faria J.B."/>
            <person name="Ferreira A.J.S."/>
            <person name="Ferreira R.C.C."/>
            <person name="Ferro M.I.T."/>
            <person name="Formighieri E.F."/>
            <person name="Franco M.C."/>
            <person name="Greggio C.C."/>
            <person name="Gruber A."/>
            <person name="Katsuyama A.M."/>
            <person name="Kishi L.T."/>
            <person name="Leite R.P."/>
            <person name="Lemos E.G.M."/>
            <person name="Lemos M.V.F."/>
            <person name="Locali E.C."/>
            <person name="Machado M.A."/>
            <person name="Madeira A.M.B.N."/>
            <person name="Martinez-Rossi N.M."/>
            <person name="Martins E.C."/>
            <person name="Meidanis J."/>
            <person name="Menck C.F.M."/>
            <person name="Miyaki C.Y."/>
            <person name="Moon D.H."/>
            <person name="Moreira L.M."/>
            <person name="Novo M.T.M."/>
            <person name="Okura V.K."/>
            <person name="Oliveira M.C."/>
            <person name="Oliveira V.R."/>
            <person name="Pereira H.A."/>
            <person name="Rossi A."/>
            <person name="Sena J.A.D."/>
            <person name="Silva C."/>
            <person name="de Souza R.F."/>
            <person name="Spinola L.A.F."/>
            <person name="Takita M.A."/>
            <person name="Tamura R.E."/>
            <person name="Teixeira E.C."/>
            <person name="Tezza R.I.D."/>
            <person name="Trindade dos Santos M."/>
            <person name="Truffi D."/>
            <person name="Tsai S.M."/>
            <person name="White F.F."/>
            <person name="Setubal J.C."/>
            <person name="Kitajima J.P."/>
        </authorList>
    </citation>
    <scope>NUCLEOTIDE SEQUENCE [LARGE SCALE GENOMIC DNA]</scope>
    <source>
        <strain>ATCC 33913 / DSM 3586 / NCPPB 528 / LMG 568 / P 25</strain>
    </source>
</reference>
<name>NORM_XANCP</name>